<proteinExistence type="inferred from homology"/>
<feature type="chain" id="PRO_0000315193" description="UDP-N-acetylglucosamine--N-acetylmuramyl-(pentapeptide) pyrophosphoryl-undecaprenol N-acetylglucosamine transferase">
    <location>
        <begin position="1"/>
        <end position="361"/>
    </location>
</feature>
<feature type="binding site" evidence="1">
    <location>
        <begin position="12"/>
        <end position="14"/>
    </location>
    <ligand>
        <name>UDP-N-acetyl-alpha-D-glucosamine</name>
        <dbReference type="ChEBI" id="CHEBI:57705"/>
    </ligand>
</feature>
<feature type="binding site" evidence="1">
    <location>
        <position position="126"/>
    </location>
    <ligand>
        <name>UDP-N-acetyl-alpha-D-glucosamine</name>
        <dbReference type="ChEBI" id="CHEBI:57705"/>
    </ligand>
</feature>
<feature type="binding site" evidence="1">
    <location>
        <position position="167"/>
    </location>
    <ligand>
        <name>UDP-N-acetyl-alpha-D-glucosamine</name>
        <dbReference type="ChEBI" id="CHEBI:57705"/>
    </ligand>
</feature>
<feature type="binding site" evidence="1">
    <location>
        <position position="192"/>
    </location>
    <ligand>
        <name>UDP-N-acetyl-alpha-D-glucosamine</name>
        <dbReference type="ChEBI" id="CHEBI:57705"/>
    </ligand>
</feature>
<feature type="binding site" evidence="1">
    <location>
        <position position="247"/>
    </location>
    <ligand>
        <name>UDP-N-acetyl-alpha-D-glucosamine</name>
        <dbReference type="ChEBI" id="CHEBI:57705"/>
    </ligand>
</feature>
<feature type="binding site" evidence="1">
    <location>
        <position position="292"/>
    </location>
    <ligand>
        <name>UDP-N-acetyl-alpha-D-glucosamine</name>
        <dbReference type="ChEBI" id="CHEBI:57705"/>
    </ligand>
</feature>
<dbReference type="EC" id="2.4.1.227" evidence="1"/>
<dbReference type="EMBL" id="CP000252">
    <property type="protein sequence ID" value="ABC76560.1"/>
    <property type="molecule type" value="Genomic_DNA"/>
</dbReference>
<dbReference type="RefSeq" id="WP_011416594.1">
    <property type="nucleotide sequence ID" value="NC_007759.1"/>
</dbReference>
<dbReference type="SMR" id="Q2LR48"/>
<dbReference type="FunCoup" id="Q2LR48">
    <property type="interactions" value="286"/>
</dbReference>
<dbReference type="STRING" id="56780.SYN_01746"/>
<dbReference type="CAZy" id="GT28">
    <property type="family name" value="Glycosyltransferase Family 28"/>
</dbReference>
<dbReference type="KEGG" id="sat:SYN_01746"/>
<dbReference type="eggNOG" id="COG0707">
    <property type="taxonomic scope" value="Bacteria"/>
</dbReference>
<dbReference type="HOGENOM" id="CLU_037404_0_1_7"/>
<dbReference type="InParanoid" id="Q2LR48"/>
<dbReference type="OrthoDB" id="9808936at2"/>
<dbReference type="UniPathway" id="UPA00219"/>
<dbReference type="Proteomes" id="UP000001933">
    <property type="component" value="Chromosome"/>
</dbReference>
<dbReference type="GO" id="GO:0005886">
    <property type="term" value="C:plasma membrane"/>
    <property type="evidence" value="ECO:0007669"/>
    <property type="project" value="UniProtKB-SubCell"/>
</dbReference>
<dbReference type="GO" id="GO:0051991">
    <property type="term" value="F:UDP-N-acetyl-D-glucosamine:N-acetylmuramoyl-L-alanyl-D-glutamyl-meso-2,6-diaminopimelyl-D-alanyl-D-alanine-diphosphoundecaprenol 4-beta-N-acetylglucosaminlytransferase activity"/>
    <property type="evidence" value="ECO:0007669"/>
    <property type="project" value="RHEA"/>
</dbReference>
<dbReference type="GO" id="GO:0050511">
    <property type="term" value="F:undecaprenyldiphospho-muramoylpentapeptide beta-N-acetylglucosaminyltransferase activity"/>
    <property type="evidence" value="ECO:0007669"/>
    <property type="project" value="UniProtKB-UniRule"/>
</dbReference>
<dbReference type="GO" id="GO:0005975">
    <property type="term" value="P:carbohydrate metabolic process"/>
    <property type="evidence" value="ECO:0007669"/>
    <property type="project" value="InterPro"/>
</dbReference>
<dbReference type="GO" id="GO:0051301">
    <property type="term" value="P:cell division"/>
    <property type="evidence" value="ECO:0007669"/>
    <property type="project" value="UniProtKB-KW"/>
</dbReference>
<dbReference type="GO" id="GO:0071555">
    <property type="term" value="P:cell wall organization"/>
    <property type="evidence" value="ECO:0007669"/>
    <property type="project" value="UniProtKB-KW"/>
</dbReference>
<dbReference type="GO" id="GO:0030259">
    <property type="term" value="P:lipid glycosylation"/>
    <property type="evidence" value="ECO:0007669"/>
    <property type="project" value="UniProtKB-UniRule"/>
</dbReference>
<dbReference type="GO" id="GO:0009252">
    <property type="term" value="P:peptidoglycan biosynthetic process"/>
    <property type="evidence" value="ECO:0007669"/>
    <property type="project" value="UniProtKB-UniRule"/>
</dbReference>
<dbReference type="GO" id="GO:0008360">
    <property type="term" value="P:regulation of cell shape"/>
    <property type="evidence" value="ECO:0007669"/>
    <property type="project" value="UniProtKB-KW"/>
</dbReference>
<dbReference type="CDD" id="cd03785">
    <property type="entry name" value="GT28_MurG"/>
    <property type="match status" value="1"/>
</dbReference>
<dbReference type="Gene3D" id="3.40.50.2000">
    <property type="entry name" value="Glycogen Phosphorylase B"/>
    <property type="match status" value="2"/>
</dbReference>
<dbReference type="HAMAP" id="MF_00033">
    <property type="entry name" value="MurG"/>
    <property type="match status" value="1"/>
</dbReference>
<dbReference type="InterPro" id="IPR006009">
    <property type="entry name" value="GlcNAc_MurG"/>
</dbReference>
<dbReference type="InterPro" id="IPR007235">
    <property type="entry name" value="Glyco_trans_28_C"/>
</dbReference>
<dbReference type="InterPro" id="IPR004276">
    <property type="entry name" value="GlycoTrans_28_N"/>
</dbReference>
<dbReference type="NCBIfam" id="TIGR01133">
    <property type="entry name" value="murG"/>
    <property type="match status" value="1"/>
</dbReference>
<dbReference type="PANTHER" id="PTHR21015:SF22">
    <property type="entry name" value="GLYCOSYLTRANSFERASE"/>
    <property type="match status" value="1"/>
</dbReference>
<dbReference type="PANTHER" id="PTHR21015">
    <property type="entry name" value="UDP-N-ACETYLGLUCOSAMINE--N-ACETYLMURAMYL-(PENTAPEPTIDE) PYROPHOSPHORYL-UNDECAPRENOL N-ACETYLGLUCOSAMINE TRANSFERASE 1"/>
    <property type="match status" value="1"/>
</dbReference>
<dbReference type="Pfam" id="PF04101">
    <property type="entry name" value="Glyco_tran_28_C"/>
    <property type="match status" value="1"/>
</dbReference>
<dbReference type="Pfam" id="PF03033">
    <property type="entry name" value="Glyco_transf_28"/>
    <property type="match status" value="1"/>
</dbReference>
<dbReference type="SUPFAM" id="SSF53756">
    <property type="entry name" value="UDP-Glycosyltransferase/glycogen phosphorylase"/>
    <property type="match status" value="1"/>
</dbReference>
<reference key="1">
    <citation type="journal article" date="2007" name="Proc. Natl. Acad. Sci. U.S.A.">
        <title>The genome of Syntrophus aciditrophicus: life at the thermodynamic limit of microbial growth.</title>
        <authorList>
            <person name="McInerney M.J."/>
            <person name="Rohlin L."/>
            <person name="Mouttaki H."/>
            <person name="Kim U."/>
            <person name="Krupp R.S."/>
            <person name="Rios-Hernandez L."/>
            <person name="Sieber J."/>
            <person name="Struchtemeyer C.G."/>
            <person name="Bhattacharyya A."/>
            <person name="Campbell J.W."/>
            <person name="Gunsalus R.P."/>
        </authorList>
    </citation>
    <scope>NUCLEOTIDE SEQUENCE [LARGE SCALE GENOMIC DNA]</scope>
    <source>
        <strain>SB</strain>
    </source>
</reference>
<name>MURG_SYNAS</name>
<organism>
    <name type="scientific">Syntrophus aciditrophicus (strain SB)</name>
    <dbReference type="NCBI Taxonomy" id="56780"/>
    <lineage>
        <taxon>Bacteria</taxon>
        <taxon>Pseudomonadati</taxon>
        <taxon>Thermodesulfobacteriota</taxon>
        <taxon>Syntrophia</taxon>
        <taxon>Syntrophales</taxon>
        <taxon>Syntrophaceae</taxon>
        <taxon>Syntrophus</taxon>
    </lineage>
</organism>
<evidence type="ECO:0000255" key="1">
    <source>
        <dbReference type="HAMAP-Rule" id="MF_00033"/>
    </source>
</evidence>
<keyword id="KW-0131">Cell cycle</keyword>
<keyword id="KW-0132">Cell division</keyword>
<keyword id="KW-0997">Cell inner membrane</keyword>
<keyword id="KW-1003">Cell membrane</keyword>
<keyword id="KW-0133">Cell shape</keyword>
<keyword id="KW-0961">Cell wall biogenesis/degradation</keyword>
<keyword id="KW-0328">Glycosyltransferase</keyword>
<keyword id="KW-0472">Membrane</keyword>
<keyword id="KW-0573">Peptidoglycan synthesis</keyword>
<keyword id="KW-1185">Reference proteome</keyword>
<keyword id="KW-0808">Transferase</keyword>
<protein>
    <recommendedName>
        <fullName evidence="1">UDP-N-acetylglucosamine--N-acetylmuramyl-(pentapeptide) pyrophosphoryl-undecaprenol N-acetylglucosamine transferase</fullName>
        <ecNumber evidence="1">2.4.1.227</ecNumber>
    </recommendedName>
    <alternativeName>
        <fullName evidence="1">Undecaprenyl-PP-MurNAc-pentapeptide-UDPGlcNAc GlcNAc transferase</fullName>
    </alternativeName>
</protein>
<sequence length="361" mass="38563">MTVRVIIAGGGTGGHLFPGVAIAEELLRRDRENRVLFVGTKRGIEKKVLKDLGFRLKLLNVEGIKGRGVMRSSLALLKLPGSLMQSMKIIRDFRPDVVIGVGGYASGPAVMAAHLMGIKTAIAEQNSIPGLTNRILGRFVDRVFLSFSDGGKWFSAKKAAVSGNPIRAAFFNGKPVLEKTGDQFSLLVFGGSQGAHAINSAFQDALPFLQLLKGCLRIVHQTGERDCESMAAAYSAQGFSARVVPFIRDMAAAYEAADLLICRAGATSIAEITAIGKAAILIPFPYAIGDHQTENAKVLLKAGAAVMIPEKDLTGKKLADEIQNFYSHPSLLKDMEAKAASLGNIYAASDIVDSCMAMIRL</sequence>
<gene>
    <name evidence="1" type="primary">murG</name>
    <name type="ordered locus">SYNAS_06810</name>
    <name type="ORF">SYN_01746</name>
</gene>
<comment type="function">
    <text evidence="1">Cell wall formation. Catalyzes the transfer of a GlcNAc subunit on undecaprenyl-pyrophosphoryl-MurNAc-pentapeptide (lipid intermediate I) to form undecaprenyl-pyrophosphoryl-MurNAc-(pentapeptide)GlcNAc (lipid intermediate II).</text>
</comment>
<comment type="catalytic activity">
    <reaction evidence="1">
        <text>di-trans,octa-cis-undecaprenyl diphospho-N-acetyl-alpha-D-muramoyl-L-alanyl-D-glutamyl-meso-2,6-diaminopimeloyl-D-alanyl-D-alanine + UDP-N-acetyl-alpha-D-glucosamine = di-trans,octa-cis-undecaprenyl diphospho-[N-acetyl-alpha-D-glucosaminyl-(1-&gt;4)]-N-acetyl-alpha-D-muramoyl-L-alanyl-D-glutamyl-meso-2,6-diaminopimeloyl-D-alanyl-D-alanine + UDP + H(+)</text>
        <dbReference type="Rhea" id="RHEA:31227"/>
        <dbReference type="ChEBI" id="CHEBI:15378"/>
        <dbReference type="ChEBI" id="CHEBI:57705"/>
        <dbReference type="ChEBI" id="CHEBI:58223"/>
        <dbReference type="ChEBI" id="CHEBI:61387"/>
        <dbReference type="ChEBI" id="CHEBI:61388"/>
        <dbReference type="EC" id="2.4.1.227"/>
    </reaction>
</comment>
<comment type="pathway">
    <text evidence="1">Cell wall biogenesis; peptidoglycan biosynthesis.</text>
</comment>
<comment type="subcellular location">
    <subcellularLocation>
        <location evidence="1">Cell inner membrane</location>
        <topology evidence="1">Peripheral membrane protein</topology>
        <orientation evidence="1">Cytoplasmic side</orientation>
    </subcellularLocation>
</comment>
<comment type="similarity">
    <text evidence="1">Belongs to the glycosyltransferase 28 family. MurG subfamily.</text>
</comment>
<accession>Q2LR48</accession>